<reference key="1">
    <citation type="journal article" date="2006" name="Proc. Natl. Acad. Sci. U.S.A.">
        <title>Molecular genetic anatomy of inter- and intraserotype variation in the human bacterial pathogen group A Streptococcus.</title>
        <authorList>
            <person name="Beres S.B."/>
            <person name="Richter E.W."/>
            <person name="Nagiec M.J."/>
            <person name="Sumby P."/>
            <person name="Porcella S.F."/>
            <person name="DeLeo F.R."/>
            <person name="Musser J.M."/>
        </authorList>
    </citation>
    <scope>NUCLEOTIDE SEQUENCE [LARGE SCALE GENOMIC DNA]</scope>
    <source>
        <strain>MGAS2096</strain>
    </source>
</reference>
<organism>
    <name type="scientific">Streptococcus pyogenes serotype M12 (strain MGAS2096)</name>
    <dbReference type="NCBI Taxonomy" id="370553"/>
    <lineage>
        <taxon>Bacteria</taxon>
        <taxon>Bacillati</taxon>
        <taxon>Bacillota</taxon>
        <taxon>Bacilli</taxon>
        <taxon>Lactobacillales</taxon>
        <taxon>Streptococcaceae</taxon>
        <taxon>Streptococcus</taxon>
    </lineage>
</organism>
<feature type="chain" id="PRO_1000055961" description="Large ribosomal subunit protein bL17">
    <location>
        <begin position="1"/>
        <end position="128"/>
    </location>
</feature>
<evidence type="ECO:0000255" key="1">
    <source>
        <dbReference type="HAMAP-Rule" id="MF_01368"/>
    </source>
</evidence>
<evidence type="ECO:0000305" key="2"/>
<sequence length="128" mass="14522">MAYRKLGRTSSQRKAMLRDLTTDLLINESIVTTEARAKEIRKTVEKMITLGKRGDLHARRQAAAYVRNEIASENYDEATDKYTSTTALQKLFSEIAPRYAERNGGYTRILKTEPRRGDAAPMAIIELV</sequence>
<gene>
    <name evidence="1" type="primary">rplQ</name>
    <name type="ordered locus">MGAS2096_Spy0074</name>
</gene>
<name>RL17_STRPB</name>
<proteinExistence type="inferred from homology"/>
<dbReference type="EMBL" id="CP000261">
    <property type="protein sequence ID" value="ABF35126.1"/>
    <property type="molecule type" value="Genomic_DNA"/>
</dbReference>
<dbReference type="SMR" id="Q1JE32"/>
<dbReference type="KEGG" id="spj:MGAS2096_Spy0074"/>
<dbReference type="HOGENOM" id="CLU_074407_2_2_9"/>
<dbReference type="GO" id="GO:0022625">
    <property type="term" value="C:cytosolic large ribosomal subunit"/>
    <property type="evidence" value="ECO:0007669"/>
    <property type="project" value="TreeGrafter"/>
</dbReference>
<dbReference type="GO" id="GO:0003735">
    <property type="term" value="F:structural constituent of ribosome"/>
    <property type="evidence" value="ECO:0007669"/>
    <property type="project" value="InterPro"/>
</dbReference>
<dbReference type="GO" id="GO:0006412">
    <property type="term" value="P:translation"/>
    <property type="evidence" value="ECO:0007669"/>
    <property type="project" value="UniProtKB-UniRule"/>
</dbReference>
<dbReference type="FunFam" id="3.90.1030.10:FF:000002">
    <property type="entry name" value="50S ribosomal protein L17"/>
    <property type="match status" value="1"/>
</dbReference>
<dbReference type="Gene3D" id="3.90.1030.10">
    <property type="entry name" value="Ribosomal protein L17"/>
    <property type="match status" value="1"/>
</dbReference>
<dbReference type="HAMAP" id="MF_01368">
    <property type="entry name" value="Ribosomal_bL17"/>
    <property type="match status" value="1"/>
</dbReference>
<dbReference type="InterPro" id="IPR000456">
    <property type="entry name" value="Ribosomal_bL17"/>
</dbReference>
<dbReference type="InterPro" id="IPR047859">
    <property type="entry name" value="Ribosomal_bL17_CS"/>
</dbReference>
<dbReference type="InterPro" id="IPR036373">
    <property type="entry name" value="Ribosomal_bL17_sf"/>
</dbReference>
<dbReference type="NCBIfam" id="TIGR00059">
    <property type="entry name" value="L17"/>
    <property type="match status" value="1"/>
</dbReference>
<dbReference type="PANTHER" id="PTHR14413:SF16">
    <property type="entry name" value="LARGE RIBOSOMAL SUBUNIT PROTEIN BL17M"/>
    <property type="match status" value="1"/>
</dbReference>
<dbReference type="PANTHER" id="PTHR14413">
    <property type="entry name" value="RIBOSOMAL PROTEIN L17"/>
    <property type="match status" value="1"/>
</dbReference>
<dbReference type="Pfam" id="PF01196">
    <property type="entry name" value="Ribosomal_L17"/>
    <property type="match status" value="1"/>
</dbReference>
<dbReference type="SUPFAM" id="SSF64263">
    <property type="entry name" value="Prokaryotic ribosomal protein L17"/>
    <property type="match status" value="1"/>
</dbReference>
<dbReference type="PROSITE" id="PS01167">
    <property type="entry name" value="RIBOSOMAL_L17"/>
    <property type="match status" value="1"/>
</dbReference>
<accession>Q1JE32</accession>
<comment type="subunit">
    <text evidence="1">Part of the 50S ribosomal subunit. Contacts protein L32.</text>
</comment>
<comment type="similarity">
    <text evidence="1">Belongs to the bacterial ribosomal protein bL17 family.</text>
</comment>
<keyword id="KW-0687">Ribonucleoprotein</keyword>
<keyword id="KW-0689">Ribosomal protein</keyword>
<protein>
    <recommendedName>
        <fullName evidence="1">Large ribosomal subunit protein bL17</fullName>
    </recommendedName>
    <alternativeName>
        <fullName evidence="2">50S ribosomal protein L17</fullName>
    </alternativeName>
</protein>